<gene>
    <name type="ordered locus">MexAM1_META1p1735</name>
</gene>
<evidence type="ECO:0000250" key="1"/>
<evidence type="ECO:0000255" key="2"/>
<evidence type="ECO:0000305" key="3"/>
<reference key="1">
    <citation type="journal article" date="1997" name="Microbiology">
        <title>Molecular and mutational analysis of a DNA region separating two methylotrophy gene clusters in Methylobacterium extorquens AM1.</title>
        <authorList>
            <person name="Chistoserdova L.V."/>
            <person name="Lidstrom M.E."/>
        </authorList>
    </citation>
    <scope>NUCLEOTIDE SEQUENCE [GENOMIC DNA]</scope>
</reference>
<reference key="2">
    <citation type="journal article" date="2009" name="PLoS ONE">
        <title>Methylobacterium genome sequences: a reference blueprint to investigate microbial metabolism of C1 compounds from natural and industrial sources.</title>
        <authorList>
            <person name="Vuilleumier S."/>
            <person name="Chistoserdova L."/>
            <person name="Lee M.-C."/>
            <person name="Bringel F."/>
            <person name="Lajus A."/>
            <person name="Zhou Y."/>
            <person name="Gourion B."/>
            <person name="Barbe V."/>
            <person name="Chang J."/>
            <person name="Cruveiller S."/>
            <person name="Dossat C."/>
            <person name="Gillett W."/>
            <person name="Gruffaz C."/>
            <person name="Haugen E."/>
            <person name="Hourcade E."/>
            <person name="Levy R."/>
            <person name="Mangenot S."/>
            <person name="Muller E."/>
            <person name="Nadalig T."/>
            <person name="Pagni M."/>
            <person name="Penny C."/>
            <person name="Peyraud R."/>
            <person name="Robinson D.G."/>
            <person name="Roche D."/>
            <person name="Rouy Z."/>
            <person name="Saenampechek C."/>
            <person name="Salvignol G."/>
            <person name="Vallenet D."/>
            <person name="Wu Z."/>
            <person name="Marx C.J."/>
            <person name="Vorholt J.A."/>
            <person name="Olson M.V."/>
            <person name="Kaul R."/>
            <person name="Weissenbach J."/>
            <person name="Medigue C."/>
            <person name="Lidstrom M.E."/>
        </authorList>
    </citation>
    <scope>NUCLEOTIDE SEQUENCE [LARGE SCALE GENOMIC DNA]</scope>
    <source>
        <strain>ATCC 14718 / DSM 1338 / JCM 2805 / NCIMB 9133 / AM1</strain>
    </source>
</reference>
<dbReference type="EC" id="3.1.1.45"/>
<dbReference type="EMBL" id="U72662">
    <property type="protein sequence ID" value="AAB58886.1"/>
    <property type="molecule type" value="Genomic_DNA"/>
</dbReference>
<dbReference type="EMBL" id="CP001510">
    <property type="protein sequence ID" value="ACS39579.1"/>
    <property type="molecule type" value="Genomic_DNA"/>
</dbReference>
<dbReference type="RefSeq" id="WP_003597626.1">
    <property type="nucleotide sequence ID" value="NC_012808.1"/>
</dbReference>
<dbReference type="SMR" id="P71505"/>
<dbReference type="STRING" id="272630.MexAM1_META1p1735"/>
<dbReference type="ESTHER" id="metex-dlhh">
    <property type="family name" value="Dienelactone_hydrolase"/>
</dbReference>
<dbReference type="KEGG" id="mea:Mex_1p1735"/>
<dbReference type="eggNOG" id="COG0412">
    <property type="taxonomic scope" value="Bacteria"/>
</dbReference>
<dbReference type="HOGENOM" id="CLU_054590_7_0_5"/>
<dbReference type="OrthoDB" id="9771666at2"/>
<dbReference type="Proteomes" id="UP000009081">
    <property type="component" value="Chromosome"/>
</dbReference>
<dbReference type="GO" id="GO:0008806">
    <property type="term" value="F:carboxymethylenebutenolidase activity"/>
    <property type="evidence" value="ECO:0007669"/>
    <property type="project" value="UniProtKB-EC"/>
</dbReference>
<dbReference type="Gene3D" id="3.40.50.1820">
    <property type="entry name" value="alpha/beta hydrolase"/>
    <property type="match status" value="1"/>
</dbReference>
<dbReference type="InterPro" id="IPR029058">
    <property type="entry name" value="AB_hydrolase_fold"/>
</dbReference>
<dbReference type="InterPro" id="IPR002925">
    <property type="entry name" value="Dienelactn_hydro"/>
</dbReference>
<dbReference type="InterPro" id="IPR051049">
    <property type="entry name" value="Dienelactone_hydrolase-like"/>
</dbReference>
<dbReference type="PANTHER" id="PTHR46623:SF6">
    <property type="entry name" value="ALPHA_BETA-HYDROLASES SUPERFAMILY PROTEIN"/>
    <property type="match status" value="1"/>
</dbReference>
<dbReference type="PANTHER" id="PTHR46623">
    <property type="entry name" value="CARBOXYMETHYLENEBUTENOLIDASE-RELATED"/>
    <property type="match status" value="1"/>
</dbReference>
<dbReference type="Pfam" id="PF01738">
    <property type="entry name" value="DLH"/>
    <property type="match status" value="1"/>
</dbReference>
<dbReference type="SUPFAM" id="SSF53474">
    <property type="entry name" value="alpha/beta-Hydrolases"/>
    <property type="match status" value="1"/>
</dbReference>
<name>DLHH_METEA</name>
<comment type="catalytic activity">
    <reaction>
        <text>2-(5-oxo-2,5-dihydrofuran-2-ylidene)acetate + H2O = 4-oxohex-2-enedioate + H(+)</text>
        <dbReference type="Rhea" id="RHEA:12372"/>
        <dbReference type="ChEBI" id="CHEBI:12040"/>
        <dbReference type="ChEBI" id="CHEBI:15377"/>
        <dbReference type="ChEBI" id="CHEBI:15378"/>
        <dbReference type="ChEBI" id="CHEBI:57263"/>
        <dbReference type="EC" id="3.1.1.45"/>
    </reaction>
</comment>
<comment type="similarity">
    <text evidence="3">Belongs to the dienelactone hydrolase family.</text>
</comment>
<protein>
    <recommendedName>
        <fullName>Putative carboxymethylenebutenolidase</fullName>
        <ecNumber>3.1.1.45</ecNumber>
    </recommendedName>
    <alternativeName>
        <fullName>Dienelactone hydrolase</fullName>
        <shortName>DLH</shortName>
    </alternativeName>
</protein>
<sequence>MTAFDADLRSLAAQTTLSRRTVIATSLATGFALAVQPVAAQTTIATDANGLIAGEVKIPMQDGVIPAYRAMPAEGGPFPTILVVQEIFGVHEHIKDVCRRLAKLGYFALAPELYARQGDVSTLTNIQQIVSEVVSKVPDAQVMSDLDAAVAFAKGTGKADTARLGITGFCWGGRITWLYAAHNPAVKAGVAWYGRLVGDSSALMPKNPVDVAADLKAPVLGLYGGADQGIPVATIDRMKEACRAAGKTCDFVVYPEAGHAFHADYRPSYRAEPAQDGWKRLQDWFRQYGVA</sequence>
<feature type="signal peptide" evidence="2">
    <location>
        <begin position="1"/>
        <end position="40"/>
    </location>
</feature>
<feature type="chain" id="PRO_0000007247" description="Putative carboxymethylenebutenolidase">
    <location>
        <begin position="41"/>
        <end position="291"/>
    </location>
</feature>
<feature type="active site" evidence="1">
    <location>
        <position position="170"/>
    </location>
</feature>
<feature type="active site" evidence="1">
    <location>
        <position position="227"/>
    </location>
</feature>
<feature type="active site" evidence="1">
    <location>
        <position position="259"/>
    </location>
</feature>
<feature type="sequence conflict" description="In Ref. 1; AAB58886." evidence="3" ref="1">
    <original>N</original>
    <variation>D</variation>
    <location>
        <position position="125"/>
    </location>
</feature>
<feature type="sequence conflict" description="In Ref. 1; AAB58886." evidence="3" ref="1">
    <original>A</original>
    <variation>D</variation>
    <location>
        <position position="140"/>
    </location>
</feature>
<accession>P71505</accession>
<accession>C5B115</accession>
<proteinExistence type="inferred from homology"/>
<keyword id="KW-0378">Hydrolase</keyword>
<keyword id="KW-1185">Reference proteome</keyword>
<keyword id="KW-0732">Signal</keyword>
<organism>
    <name type="scientific">Methylorubrum extorquens (strain ATCC 14718 / DSM 1338 / JCM 2805 / NCIMB 9133 / AM1)</name>
    <name type="common">Methylobacterium extorquens</name>
    <dbReference type="NCBI Taxonomy" id="272630"/>
    <lineage>
        <taxon>Bacteria</taxon>
        <taxon>Pseudomonadati</taxon>
        <taxon>Pseudomonadota</taxon>
        <taxon>Alphaproteobacteria</taxon>
        <taxon>Hyphomicrobiales</taxon>
        <taxon>Methylobacteriaceae</taxon>
        <taxon>Methylorubrum</taxon>
    </lineage>
</organism>